<comment type="function">
    <text evidence="3">Inhibits neuronal cell proliferation by negative regulation of the cell cycle transition. Promotes pituitary gonadotrope cell proliferation, migration and invasion, when overexpressed. May play a role in cell pituitary tumor development.</text>
</comment>
<comment type="subcellular location">
    <subcellularLocation>
        <location evidence="4">Secreted</location>
    </subcellularLocation>
    <subcellularLocation>
        <location evidence="2">Mitochondrion</location>
    </subcellularLocation>
</comment>
<comment type="tissue specificity">
    <text evidence="2 3">Expressed in the brain. Weakly expressed in embryonic stem (ES) cells. Expressed in ES-derived neural stem cells (NSCs) and neuronal cells.</text>
</comment>
<comment type="induction">
    <text evidence="2 3">Up-regulated upon differentiation into neuronal cells in the presence of retinoic acid and BDNF. Down-regulated upon differentiation into astroglial cells. Down-regulated in gonadotrope cells by bone morphogenetic protein and retinoic acid.</text>
</comment>
<comment type="similarity">
    <text evidence="4">Belongs to the BRINP family.</text>
</comment>
<keyword id="KW-0131">Cell cycle</keyword>
<keyword id="KW-0325">Glycoprotein</keyword>
<keyword id="KW-0338">Growth arrest</keyword>
<keyword id="KW-0496">Mitochondrion</keyword>
<keyword id="KW-1185">Reference proteome</keyword>
<keyword id="KW-0964">Secreted</keyword>
<keyword id="KW-0732">Signal</keyword>
<gene>
    <name type="primary">Brinp3</name>
    <name type="synonym">Fam5c</name>
</gene>
<name>BRNP3_MOUSE</name>
<organism>
    <name type="scientific">Mus musculus</name>
    <name type="common">Mouse</name>
    <dbReference type="NCBI Taxonomy" id="10090"/>
    <lineage>
        <taxon>Eukaryota</taxon>
        <taxon>Metazoa</taxon>
        <taxon>Chordata</taxon>
        <taxon>Craniata</taxon>
        <taxon>Vertebrata</taxon>
        <taxon>Euteleostomi</taxon>
        <taxon>Mammalia</taxon>
        <taxon>Eutheria</taxon>
        <taxon>Euarchontoglires</taxon>
        <taxon>Glires</taxon>
        <taxon>Rodentia</taxon>
        <taxon>Myomorpha</taxon>
        <taxon>Muroidea</taxon>
        <taxon>Muridae</taxon>
        <taxon>Murinae</taxon>
        <taxon>Mus</taxon>
        <taxon>Mus</taxon>
    </lineage>
</organism>
<proteinExistence type="evidence at transcript level"/>
<feature type="signal peptide" evidence="1">
    <location>
        <begin position="1"/>
        <end position="33"/>
    </location>
</feature>
<feature type="chain" id="PRO_0000045775" description="BMP/retinoic acid-inducible neural-specific protein 3">
    <location>
        <begin position="34"/>
        <end position="766"/>
    </location>
</feature>
<feature type="domain" description="MACPF">
    <location>
        <begin position="74"/>
        <end position="264"/>
    </location>
</feature>
<feature type="glycosylation site" description="N-linked (GlcNAc...) asparagine" evidence="1">
    <location>
        <position position="168"/>
    </location>
</feature>
<feature type="glycosylation site" description="N-linked (GlcNAc...) asparagine" evidence="1">
    <location>
        <position position="337"/>
    </location>
</feature>
<feature type="glycosylation site" description="N-linked (GlcNAc...) asparagine" evidence="1">
    <location>
        <position position="456"/>
    </location>
</feature>
<feature type="glycosylation site" description="N-linked (GlcNAc...) asparagine" evidence="1">
    <location>
        <position position="562"/>
    </location>
</feature>
<feature type="glycosylation site" description="N-linked (GlcNAc...) asparagine" evidence="1">
    <location>
        <position position="609"/>
    </location>
</feature>
<feature type="glycosylation site" description="N-linked (GlcNAc...) asparagine" evidence="1">
    <location>
        <position position="641"/>
    </location>
</feature>
<feature type="sequence conflict" description="In Ref. 1; AAH99956." evidence="4" ref="1">
    <original>T</original>
    <variation>A</variation>
    <location>
        <position position="599"/>
    </location>
</feature>
<evidence type="ECO:0000255" key="1"/>
<evidence type="ECO:0000269" key="2">
    <source>
    </source>
</evidence>
<evidence type="ECO:0000269" key="3">
    <source>
    </source>
</evidence>
<evidence type="ECO:0000305" key="4"/>
<reference key="1">
    <citation type="journal article" date="2004" name="Genome Res.">
        <title>The status, quality, and expansion of the NIH full-length cDNA project: the Mammalian Gene Collection (MGC).</title>
        <authorList>
            <consortium name="The MGC Project Team"/>
        </authorList>
    </citation>
    <scope>NUCLEOTIDE SEQUENCE [LARGE SCALE MRNA]</scope>
    <source>
        <strain>CD-1</strain>
        <tissue>Eye</tissue>
        <tissue>Neural stem cell</tissue>
    </source>
</reference>
<reference key="2">
    <citation type="journal article" date="2007" name="Endocrinology">
        <title>Bone morphogenetic protein and retinoic acid-inducible neural specific protein-3 is expressed in gonadotrope cell pituitary adenomas and induces proliferation, migration, and invasion.</title>
        <authorList>
            <person name="Shorts-Cary L."/>
            <person name="Xu M."/>
            <person name="Ertel J."/>
            <person name="Kleinschmidt-Demasters B.K."/>
            <person name="Lillehei K."/>
            <person name="Matsuoka I."/>
            <person name="Nielsen-Preiss S."/>
            <person name="Wierman M.E."/>
        </authorList>
    </citation>
    <scope>SUBCELLULAR LOCATION</scope>
    <scope>TISSUE SPECIFICITY</scope>
    <scope>INDUCTION</scope>
</reference>
<reference key="3">
    <citation type="journal article" date="2010" name="J. Neurosci. Res.">
        <title>Analysis of the expression and function of BRINP family genes during neuronal differentiation in mouse embryonic stem cell-derived neural stem cells.</title>
        <authorList>
            <person name="Terashima M."/>
            <person name="Kobayashi M."/>
            <person name="Motomiya M."/>
            <person name="Inoue N."/>
            <person name="Yoshida T."/>
            <person name="Okano H."/>
            <person name="Iwasaki N."/>
            <person name="Minami A."/>
            <person name="Matsuoka I."/>
        </authorList>
    </citation>
    <scope>FUNCTION</scope>
    <scope>INDUCTION</scope>
    <scope>TISSUE SPECIFICITY</scope>
</reference>
<protein>
    <recommendedName>
        <fullName>BMP/retinoic acid-inducible neural-specific protein 3</fullName>
    </recommendedName>
</protein>
<accession>Q499E0</accession>
<accession>Q8K0R9</accession>
<dbReference type="EMBL" id="BC030498">
    <property type="protein sequence ID" value="AAH30498.1"/>
    <property type="molecule type" value="mRNA"/>
</dbReference>
<dbReference type="EMBL" id="BC099956">
    <property type="protein sequence ID" value="AAH99956.1"/>
    <property type="molecule type" value="mRNA"/>
</dbReference>
<dbReference type="CCDS" id="CCDS15351.1"/>
<dbReference type="RefSeq" id="NP_001139279.1">
    <property type="nucleotide sequence ID" value="NM_001145807.1"/>
</dbReference>
<dbReference type="RefSeq" id="NP_001344500.1">
    <property type="nucleotide sequence ID" value="NM_001357571.1"/>
</dbReference>
<dbReference type="RefSeq" id="NP_705767.3">
    <property type="nucleotide sequence ID" value="NM_153539.3"/>
</dbReference>
<dbReference type="RefSeq" id="XP_006529430.1">
    <property type="nucleotide sequence ID" value="XM_006529367.5"/>
</dbReference>
<dbReference type="RefSeq" id="XP_006529431.1">
    <property type="nucleotide sequence ID" value="XM_006529368.5"/>
</dbReference>
<dbReference type="RefSeq" id="XP_017175281.1">
    <property type="nucleotide sequence ID" value="XM_017319792.1"/>
</dbReference>
<dbReference type="FunCoup" id="Q499E0">
    <property type="interactions" value="201"/>
</dbReference>
<dbReference type="STRING" id="10090.ENSMUSP00000074201"/>
<dbReference type="GlyCosmos" id="Q499E0">
    <property type="glycosylation" value="6 sites, No reported glycans"/>
</dbReference>
<dbReference type="GlyGen" id="Q499E0">
    <property type="glycosylation" value="6 sites, 1 N-linked glycan (1 site)"/>
</dbReference>
<dbReference type="iPTMnet" id="Q499E0"/>
<dbReference type="PhosphoSitePlus" id="Q499E0"/>
<dbReference type="PaxDb" id="10090-ENSMUSP00000074201"/>
<dbReference type="PeptideAtlas" id="Q499E0"/>
<dbReference type="ProteomicsDB" id="265381"/>
<dbReference type="Antibodypedia" id="55879">
    <property type="antibodies" value="82 antibodies from 17 providers"/>
</dbReference>
<dbReference type="DNASU" id="215378"/>
<dbReference type="Ensembl" id="ENSMUST00000074622.11">
    <property type="protein sequence ID" value="ENSMUSP00000074201.5"/>
    <property type="gene ID" value="ENSMUSG00000035131.15"/>
</dbReference>
<dbReference type="Ensembl" id="ENSMUST00000166814.8">
    <property type="protein sequence ID" value="ENSMUSP00000126074.2"/>
    <property type="gene ID" value="ENSMUSG00000035131.15"/>
</dbReference>
<dbReference type="GeneID" id="215378"/>
<dbReference type="KEGG" id="mmu:215378"/>
<dbReference type="UCSC" id="uc007cxo.2">
    <property type="organism name" value="mouse"/>
</dbReference>
<dbReference type="AGR" id="MGI:2443035"/>
<dbReference type="CTD" id="339479"/>
<dbReference type="MGI" id="MGI:2443035">
    <property type="gene designation" value="Brinp3"/>
</dbReference>
<dbReference type="VEuPathDB" id="HostDB:ENSMUSG00000035131"/>
<dbReference type="eggNOG" id="ENOG502QQZS">
    <property type="taxonomic scope" value="Eukaryota"/>
</dbReference>
<dbReference type="GeneTree" id="ENSGT00940000156099"/>
<dbReference type="HOGENOM" id="CLU_018347_0_0_1"/>
<dbReference type="InParanoid" id="Q499E0"/>
<dbReference type="OMA" id="CQCGPRF"/>
<dbReference type="OrthoDB" id="10013872at2759"/>
<dbReference type="PhylomeDB" id="Q499E0"/>
<dbReference type="TreeFam" id="TF331600"/>
<dbReference type="BioGRID-ORCS" id="215378">
    <property type="hits" value="1 hit in 78 CRISPR screens"/>
</dbReference>
<dbReference type="ChiTaRS" id="Brinp3">
    <property type="organism name" value="mouse"/>
</dbReference>
<dbReference type="PRO" id="PR:Q499E0"/>
<dbReference type="Proteomes" id="UP000000589">
    <property type="component" value="Chromosome 1"/>
</dbReference>
<dbReference type="RNAct" id="Q499E0">
    <property type="molecule type" value="protein"/>
</dbReference>
<dbReference type="Bgee" id="ENSMUSG00000035131">
    <property type="expression patterns" value="Expressed in lumbar subsegment of spinal cord and 73 other cell types or tissues"/>
</dbReference>
<dbReference type="ExpressionAtlas" id="Q499E0">
    <property type="expression patterns" value="baseline and differential"/>
</dbReference>
<dbReference type="GO" id="GO:0030425">
    <property type="term" value="C:dendrite"/>
    <property type="evidence" value="ECO:0007669"/>
    <property type="project" value="Ensembl"/>
</dbReference>
<dbReference type="GO" id="GO:0005576">
    <property type="term" value="C:extracellular region"/>
    <property type="evidence" value="ECO:0007669"/>
    <property type="project" value="UniProtKB-SubCell"/>
</dbReference>
<dbReference type="GO" id="GO:0005739">
    <property type="term" value="C:mitochondrion"/>
    <property type="evidence" value="ECO:0007669"/>
    <property type="project" value="UniProtKB-SubCell"/>
</dbReference>
<dbReference type="GO" id="GO:0043025">
    <property type="term" value="C:neuronal cell body"/>
    <property type="evidence" value="ECO:0007669"/>
    <property type="project" value="Ensembl"/>
</dbReference>
<dbReference type="GO" id="GO:0071300">
    <property type="term" value="P:cellular response to retinoic acid"/>
    <property type="evidence" value="ECO:0000314"/>
    <property type="project" value="UniProtKB"/>
</dbReference>
<dbReference type="GO" id="GO:0021953">
    <property type="term" value="P:central nervous system neuron differentiation"/>
    <property type="evidence" value="ECO:0000314"/>
    <property type="project" value="UniProtKB"/>
</dbReference>
<dbReference type="GO" id="GO:0035640">
    <property type="term" value="P:exploration behavior"/>
    <property type="evidence" value="ECO:0000315"/>
    <property type="project" value="MGI"/>
</dbReference>
<dbReference type="GO" id="GO:0035264">
    <property type="term" value="P:multicellular organism growth"/>
    <property type="evidence" value="ECO:0000315"/>
    <property type="project" value="MGI"/>
</dbReference>
<dbReference type="GO" id="GO:0045930">
    <property type="term" value="P:negative regulation of mitotic cell cycle"/>
    <property type="evidence" value="ECO:0000314"/>
    <property type="project" value="UniProtKB"/>
</dbReference>
<dbReference type="GO" id="GO:0007399">
    <property type="term" value="P:nervous system development"/>
    <property type="evidence" value="ECO:0000315"/>
    <property type="project" value="MGI"/>
</dbReference>
<dbReference type="GO" id="GO:0045666">
    <property type="term" value="P:positive regulation of neuron differentiation"/>
    <property type="evidence" value="ECO:0007669"/>
    <property type="project" value="InterPro"/>
</dbReference>
<dbReference type="GO" id="GO:0035176">
    <property type="term" value="P:social behavior"/>
    <property type="evidence" value="ECO:0000315"/>
    <property type="project" value="MGI"/>
</dbReference>
<dbReference type="InterPro" id="IPR033237">
    <property type="entry name" value="BRINP"/>
</dbReference>
<dbReference type="InterPro" id="IPR009030">
    <property type="entry name" value="Growth_fac_rcpt_cys_sf"/>
</dbReference>
<dbReference type="InterPro" id="IPR020864">
    <property type="entry name" value="MACPF"/>
</dbReference>
<dbReference type="PANTHER" id="PTHR15564:SF2">
    <property type="entry name" value="BMP_RETINOIC ACID-INDUCIBLE NEURAL-SPECIFIC PROTEIN 3"/>
    <property type="match status" value="1"/>
</dbReference>
<dbReference type="PANTHER" id="PTHR15564">
    <property type="entry name" value="MACPF DOMAIN-CONTAINING PROTEIN"/>
    <property type="match status" value="1"/>
</dbReference>
<dbReference type="Pfam" id="PF19052">
    <property type="entry name" value="BRINP"/>
    <property type="match status" value="1"/>
</dbReference>
<dbReference type="Pfam" id="PF25415">
    <property type="entry name" value="EGF_BRNP1-3"/>
    <property type="match status" value="1"/>
</dbReference>
<dbReference type="Pfam" id="PF01823">
    <property type="entry name" value="MACPF"/>
    <property type="match status" value="1"/>
</dbReference>
<dbReference type="SMART" id="SM00457">
    <property type="entry name" value="MACPF"/>
    <property type="match status" value="1"/>
</dbReference>
<dbReference type="SUPFAM" id="SSF57184">
    <property type="entry name" value="Growth factor receptor domain"/>
    <property type="match status" value="1"/>
</dbReference>
<sequence length="766" mass="88483">MIWRRRAGAELSSLMALWEWIVLSLHCWVLAVAAVSDQHATSPFDWLLSDKGPFHRSQEYTDFVDRSRQGFSTRYKIYREFGRWKVNNLAVERRNFLGSPLPLAPEFFRNIRLLGRRPTLQQITENLIKKYGTHFLLSATLGGEESLTIFVDKRKLSKRSEGSETSTNSSSVTLETLHQLAASYFIDRDSTLRRLHHIQIASTAIKVTETRTGPLGCSNYDNLDSVSSVLVQSPENKIQLQGLQVLLPDYLQERFVQAALSYIACNSEGEFICKDNDCWCHCGPKFPECNCPSMDIQAMEENLLRITETWKAYNSDFEDSDEFKFFMKRLPMNYFLNTSTIMHLWTMDSNFQRRYEQLENSMKQLFLKAHRIVHKLFSLSKRCHKQPLISLPRQRTSTYWLTRIQSFLYCNENGLLGSFSEETHSCTCPNDQVVCTAFLPCTVGDASACLTCAPDNRTRCGTCNTGYMLSQGLCKPEVAESTDHYIGFETDLQDLEMKYLLQKTDRRIEVHAIFISNDMRLNSWFDPSWRKRMLLTLKSNKYKSSLVHMILGLSLQICLTKNSTLEPVLAVYVNPFGGSHSESWFMPVSESSFPDWERTKLDLPLQCYNWTLTLGNKWKTFFETVHIYLRSRIKANGPNSNESIYYEPLEFIDPSRNLGYMKINNIQVFGYSMHFDPEAIRDLILQLDYPYTQGSQDSALLQLLEIRDRVNKLSPPGQRRLDLFSCLLRHRLKLSTSEVVRIQSALQAFNAKLPNTVDYDTTKLCS</sequence>